<reference key="1">
    <citation type="journal article" date="2000" name="Nature">
        <title>Sequence and analysis of chromosome 1 of the plant Arabidopsis thaliana.</title>
        <authorList>
            <person name="Theologis A."/>
            <person name="Ecker J.R."/>
            <person name="Palm C.J."/>
            <person name="Federspiel N.A."/>
            <person name="Kaul S."/>
            <person name="White O."/>
            <person name="Alonso J."/>
            <person name="Altafi H."/>
            <person name="Araujo R."/>
            <person name="Bowman C.L."/>
            <person name="Brooks S.Y."/>
            <person name="Buehler E."/>
            <person name="Chan A."/>
            <person name="Chao Q."/>
            <person name="Chen H."/>
            <person name="Cheuk R.F."/>
            <person name="Chin C.W."/>
            <person name="Chung M.K."/>
            <person name="Conn L."/>
            <person name="Conway A.B."/>
            <person name="Conway A.R."/>
            <person name="Creasy T.H."/>
            <person name="Dewar K."/>
            <person name="Dunn P."/>
            <person name="Etgu P."/>
            <person name="Feldblyum T.V."/>
            <person name="Feng J.-D."/>
            <person name="Fong B."/>
            <person name="Fujii C.Y."/>
            <person name="Gill J.E."/>
            <person name="Goldsmith A.D."/>
            <person name="Haas B."/>
            <person name="Hansen N.F."/>
            <person name="Hughes B."/>
            <person name="Huizar L."/>
            <person name="Hunter J.L."/>
            <person name="Jenkins J."/>
            <person name="Johnson-Hopson C."/>
            <person name="Khan S."/>
            <person name="Khaykin E."/>
            <person name="Kim C.J."/>
            <person name="Koo H.L."/>
            <person name="Kremenetskaia I."/>
            <person name="Kurtz D.B."/>
            <person name="Kwan A."/>
            <person name="Lam B."/>
            <person name="Langin-Hooper S."/>
            <person name="Lee A."/>
            <person name="Lee J.M."/>
            <person name="Lenz C.A."/>
            <person name="Li J.H."/>
            <person name="Li Y.-P."/>
            <person name="Lin X."/>
            <person name="Liu S.X."/>
            <person name="Liu Z.A."/>
            <person name="Luros J.S."/>
            <person name="Maiti R."/>
            <person name="Marziali A."/>
            <person name="Militscher J."/>
            <person name="Miranda M."/>
            <person name="Nguyen M."/>
            <person name="Nierman W.C."/>
            <person name="Osborne B.I."/>
            <person name="Pai G."/>
            <person name="Peterson J."/>
            <person name="Pham P.K."/>
            <person name="Rizzo M."/>
            <person name="Rooney T."/>
            <person name="Rowley D."/>
            <person name="Sakano H."/>
            <person name="Salzberg S.L."/>
            <person name="Schwartz J.R."/>
            <person name="Shinn P."/>
            <person name="Southwick A.M."/>
            <person name="Sun H."/>
            <person name="Tallon L.J."/>
            <person name="Tambunga G."/>
            <person name="Toriumi M.J."/>
            <person name="Town C.D."/>
            <person name="Utterback T."/>
            <person name="Van Aken S."/>
            <person name="Vaysberg M."/>
            <person name="Vysotskaia V.S."/>
            <person name="Walker M."/>
            <person name="Wu D."/>
            <person name="Yu G."/>
            <person name="Fraser C.M."/>
            <person name="Venter J.C."/>
            <person name="Davis R.W."/>
        </authorList>
    </citation>
    <scope>NUCLEOTIDE SEQUENCE [LARGE SCALE GENOMIC DNA]</scope>
    <source>
        <strain>cv. Columbia</strain>
    </source>
</reference>
<reference key="2">
    <citation type="journal article" date="2017" name="Plant J.">
        <title>Araport11: a complete reannotation of the Arabidopsis thaliana reference genome.</title>
        <authorList>
            <person name="Cheng C.Y."/>
            <person name="Krishnakumar V."/>
            <person name="Chan A.P."/>
            <person name="Thibaud-Nissen F."/>
            <person name="Schobel S."/>
            <person name="Town C.D."/>
        </authorList>
    </citation>
    <scope>GENOME REANNOTATION</scope>
    <source>
        <strain>cv. Columbia</strain>
    </source>
</reference>
<reference key="3">
    <citation type="journal article" date="2002" name="Genome Biol.">
        <title>Evaluation and classification of RING-finger domains encoded by the Arabidopsis genome.</title>
        <authorList>
            <person name="Kosarev P."/>
            <person name="Mayer K.F.X."/>
            <person name="Hardtke C.S."/>
        </authorList>
    </citation>
    <scope>GENE FAMILY ORGANIZATION</scope>
</reference>
<reference key="4">
    <citation type="journal article" date="2006" name="J. Mol. Evol.">
        <title>The ATL gene family from Arabidopsis thaliana and Oryza sativa comprises a large number of putative ubiquitin ligases of the RING-H2 type.</title>
        <authorList>
            <person name="Serrano M."/>
            <person name="Parra S."/>
            <person name="Alcaraz L.D."/>
            <person name="Guzman P."/>
        </authorList>
    </citation>
    <scope>NOMENCLATURE</scope>
    <scope>GENE FAMILY ORGANIZATION</scope>
</reference>
<sequence length="178" mass="19890">MSSEEDDAISLISVLGLAVFIGLCILLVVLIATSALILVIYVIIDCILRPFLGTCLDLDLEIGVQRGQQRARIVTYHTIISTGLRLPDFEREGKKRGLKQSVIETLLPKLLVGQGNHEEDEEKSLESRECAICLSGYVVNEECRVFPVCRHIYHALCIDAWLKNHLTCPTCRKDLPES</sequence>
<comment type="catalytic activity">
    <reaction evidence="4">
        <text>S-ubiquitinyl-[E2 ubiquitin-conjugating enzyme]-L-cysteine + [acceptor protein]-L-lysine = [E2 ubiquitin-conjugating enzyme]-L-cysteine + N(6)-ubiquitinyl-[acceptor protein]-L-lysine.</text>
        <dbReference type="EC" id="2.3.2.27"/>
    </reaction>
</comment>
<comment type="pathway">
    <text>Protein modification; protein ubiquitination.</text>
</comment>
<comment type="subcellular location">
    <subcellularLocation>
        <location evidence="4">Membrane</location>
        <topology evidence="4">Single-pass membrane protein</topology>
    </subcellularLocation>
</comment>
<comment type="domain">
    <text evidence="1">The RING-type zinc finger domain mediates binding to an E2 ubiquitin-conjugating enzyme.</text>
</comment>
<comment type="similarity">
    <text evidence="4">Belongs to the RING-type zinc finger family. ATL subfamily.</text>
</comment>
<organism>
    <name type="scientific">Arabidopsis thaliana</name>
    <name type="common">Mouse-ear cress</name>
    <dbReference type="NCBI Taxonomy" id="3702"/>
    <lineage>
        <taxon>Eukaryota</taxon>
        <taxon>Viridiplantae</taxon>
        <taxon>Streptophyta</taxon>
        <taxon>Embryophyta</taxon>
        <taxon>Tracheophyta</taxon>
        <taxon>Spermatophyta</taxon>
        <taxon>Magnoliopsida</taxon>
        <taxon>eudicotyledons</taxon>
        <taxon>Gunneridae</taxon>
        <taxon>Pentapetalae</taxon>
        <taxon>rosids</taxon>
        <taxon>malvids</taxon>
        <taxon>Brassicales</taxon>
        <taxon>Brassicaceae</taxon>
        <taxon>Camelineae</taxon>
        <taxon>Arabidopsis</taxon>
    </lineage>
</organism>
<name>ATL19_ARATH</name>
<feature type="chain" id="PRO_0000396119" description="Putative RING-H2 finger protein ATL19">
    <location>
        <begin position="1"/>
        <end position="178"/>
    </location>
</feature>
<feature type="transmembrane region" description="Helical" evidence="2">
    <location>
        <begin position="11"/>
        <end position="31"/>
    </location>
</feature>
<feature type="zinc finger region" description="RING-type; atypical" evidence="3">
    <location>
        <begin position="130"/>
        <end position="172"/>
    </location>
</feature>
<dbReference type="EC" id="2.3.2.27" evidence="4"/>
<dbReference type="EMBL" id="AC019018">
    <property type="protein sequence ID" value="AAG52270.1"/>
    <property type="molecule type" value="Genomic_DNA"/>
</dbReference>
<dbReference type="EMBL" id="AC022520">
    <property type="status" value="NOT_ANNOTATED_CDS"/>
    <property type="molecule type" value="Genomic_DNA"/>
</dbReference>
<dbReference type="EMBL" id="CP002684">
    <property type="protein sequence ID" value="AEE32876.1"/>
    <property type="molecule type" value="Genomic_DNA"/>
</dbReference>
<dbReference type="RefSeq" id="NP_175709.1">
    <property type="nucleotide sequence ID" value="NM_104179.1"/>
</dbReference>
<dbReference type="SMR" id="Q9C919"/>
<dbReference type="FunCoup" id="Q9C919">
    <property type="interactions" value="1283"/>
</dbReference>
<dbReference type="STRING" id="3702.Q9C919"/>
<dbReference type="PaxDb" id="3702-AT1G53010.1"/>
<dbReference type="EnsemblPlants" id="AT1G53010.1">
    <property type="protein sequence ID" value="AT1G53010.1"/>
    <property type="gene ID" value="AT1G53010"/>
</dbReference>
<dbReference type="GeneID" id="841734"/>
<dbReference type="Gramene" id="AT1G53010.1">
    <property type="protein sequence ID" value="AT1G53010.1"/>
    <property type="gene ID" value="AT1G53010"/>
</dbReference>
<dbReference type="KEGG" id="ath:AT1G53010"/>
<dbReference type="Araport" id="AT1G53010"/>
<dbReference type="TAIR" id="AT1G53010">
    <property type="gene designation" value="ATL19"/>
</dbReference>
<dbReference type="eggNOG" id="KOG0800">
    <property type="taxonomic scope" value="Eukaryota"/>
</dbReference>
<dbReference type="HOGENOM" id="CLU_1512648_0_0_1"/>
<dbReference type="InParanoid" id="Q9C919"/>
<dbReference type="OMA" id="FHCDCIN"/>
<dbReference type="PhylomeDB" id="Q9C919"/>
<dbReference type="UniPathway" id="UPA00143"/>
<dbReference type="PRO" id="PR:Q9C919"/>
<dbReference type="Proteomes" id="UP000006548">
    <property type="component" value="Chromosome 1"/>
</dbReference>
<dbReference type="ExpressionAtlas" id="Q9C919">
    <property type="expression patterns" value="baseline and differential"/>
</dbReference>
<dbReference type="GO" id="GO:0016020">
    <property type="term" value="C:membrane"/>
    <property type="evidence" value="ECO:0007669"/>
    <property type="project" value="UniProtKB-SubCell"/>
</dbReference>
<dbReference type="GO" id="GO:0016740">
    <property type="term" value="F:transferase activity"/>
    <property type="evidence" value="ECO:0007669"/>
    <property type="project" value="UniProtKB-KW"/>
</dbReference>
<dbReference type="GO" id="GO:0008270">
    <property type="term" value="F:zinc ion binding"/>
    <property type="evidence" value="ECO:0007669"/>
    <property type="project" value="UniProtKB-KW"/>
</dbReference>
<dbReference type="GO" id="GO:0016567">
    <property type="term" value="P:protein ubiquitination"/>
    <property type="evidence" value="ECO:0007669"/>
    <property type="project" value="UniProtKB-UniPathway"/>
</dbReference>
<dbReference type="Gene3D" id="3.30.40.10">
    <property type="entry name" value="Zinc/RING finger domain, C3HC4 (zinc finger)"/>
    <property type="match status" value="1"/>
</dbReference>
<dbReference type="InterPro" id="IPR053238">
    <property type="entry name" value="RING-H2_zinc_finger"/>
</dbReference>
<dbReference type="InterPro" id="IPR001841">
    <property type="entry name" value="Znf_RING"/>
</dbReference>
<dbReference type="InterPro" id="IPR013083">
    <property type="entry name" value="Znf_RING/FYVE/PHD"/>
</dbReference>
<dbReference type="PANTHER" id="PTHR14155">
    <property type="entry name" value="RING FINGER DOMAIN-CONTAINING"/>
    <property type="match status" value="1"/>
</dbReference>
<dbReference type="PANTHER" id="PTHR14155:SF512">
    <property type="entry name" value="RING-H2 FINGER PROTEIN ATL19-RELATED"/>
    <property type="match status" value="1"/>
</dbReference>
<dbReference type="Pfam" id="PF13639">
    <property type="entry name" value="zf-RING_2"/>
    <property type="match status" value="1"/>
</dbReference>
<dbReference type="SMART" id="SM00184">
    <property type="entry name" value="RING"/>
    <property type="match status" value="1"/>
</dbReference>
<dbReference type="SUPFAM" id="SSF57850">
    <property type="entry name" value="RING/U-box"/>
    <property type="match status" value="1"/>
</dbReference>
<dbReference type="PROSITE" id="PS50089">
    <property type="entry name" value="ZF_RING_2"/>
    <property type="match status" value="1"/>
</dbReference>
<keyword id="KW-0472">Membrane</keyword>
<keyword id="KW-0479">Metal-binding</keyword>
<keyword id="KW-1185">Reference proteome</keyword>
<keyword id="KW-0808">Transferase</keyword>
<keyword id="KW-0812">Transmembrane</keyword>
<keyword id="KW-1133">Transmembrane helix</keyword>
<keyword id="KW-0833">Ubl conjugation pathway</keyword>
<keyword id="KW-0862">Zinc</keyword>
<keyword id="KW-0863">Zinc-finger</keyword>
<evidence type="ECO:0000250" key="1"/>
<evidence type="ECO:0000255" key="2"/>
<evidence type="ECO:0000255" key="3">
    <source>
        <dbReference type="PROSITE-ProRule" id="PRU00175"/>
    </source>
</evidence>
<evidence type="ECO:0000305" key="4"/>
<gene>
    <name type="primary">ATL19</name>
    <name type="ordered locus">At1g53010</name>
    <name type="ORF">F14G24.29</name>
    <name type="ORF">F8L10.17</name>
</gene>
<proteinExistence type="inferred from homology"/>
<protein>
    <recommendedName>
        <fullName>Putative RING-H2 finger protein ATL19</fullName>
        <ecNumber evidence="4">2.3.2.27</ecNumber>
    </recommendedName>
    <alternativeName>
        <fullName evidence="4">RING-type E3 ubiquitin transferase ATL19</fullName>
    </alternativeName>
</protein>
<accession>Q9C919</accession>